<accession>B7LXE0</accession>
<protein>
    <recommendedName>
        <fullName evidence="1">DNA mismatch repair protein MutS</fullName>
    </recommendedName>
</protein>
<sequence>MSAIENFDAHTPMMQQYLKLKAQHPEILLFYRMGDFYELFYDDAKRASQLLDISLTKRGASAGEPIPMAGIPYHAVENYLAKLVNQGESVAICEQIGDPATSKGPVERKVVRIVTPGTISDEALLQERQDNLLAAIWQDSKGFGYATLDISSGRFRLSEPADRETMAAELQRTNPAELLYAEDFAEMSLIEGRRGLRRRPLWEFEIDTARQQLNLQFGTRDLVGFGVENAPRGLCAAGCLLQYAKDTQRTTLPHIRSITMEREQDSIIMDAATRRNLEITQNLAGGAENTLASVLDCTVTPMGSRMLKRWLHMPVRDTRVLLERQQTIGALQDFTAELQPVLRQVGDLERILARLALRTARPRDLARMRHAFQQLPELRAQLETVDSAPVQALREKMGEFAELRDLLERAIIDTPPVLVRDGGVIASGYNEELDEWRALADGATDYLERLEVRERERTGLDTLKVGFNAVHGYYIQISRGQSHLAPINYMRRQTLKNAERYIIPELKEYEDKVLTSKGKALALEKQLYEELFDLLLPHLEALQQSASALAELDVLVNLAERAYTLNYTCPTFIDKPGIRITEGRHPVVEQVLNEPFIANPLNLSPQRRMLIITGPNMGGKSTYMRQTALIALMAYIGSYVPAQKVEIGPIDRIFTRVGAADDLASGRSTFMVEMTETANILHNATEYSLVLMDEIGRGTSTYDGLSLAWACAENLANKIKALTLFATHYFELTQLPEKMEGVANVHLDALEHGDTIAFMHSVQDGAASKSYGLAVAALAGVPKEVIKRARQKLRELESISPNAAATQVDGTQMSLLSVPEETSPAVEALENLDPDSLTPRQALEWIYRLKSLV</sequence>
<proteinExistence type="inferred from homology"/>
<evidence type="ECO:0000255" key="1">
    <source>
        <dbReference type="HAMAP-Rule" id="MF_00096"/>
    </source>
</evidence>
<comment type="function">
    <text evidence="1">This protein is involved in the repair of mismatches in DNA. It is possible that it carries out the mismatch recognition step. This protein has a weak ATPase activity.</text>
</comment>
<comment type="similarity">
    <text evidence="1">Belongs to the DNA mismatch repair MutS family.</text>
</comment>
<feature type="chain" id="PRO_1000117285" description="DNA mismatch repair protein MutS">
    <location>
        <begin position="1"/>
        <end position="853"/>
    </location>
</feature>
<feature type="binding site" evidence="1">
    <location>
        <begin position="614"/>
        <end position="621"/>
    </location>
    <ligand>
        <name>ATP</name>
        <dbReference type="ChEBI" id="CHEBI:30616"/>
    </ligand>
</feature>
<gene>
    <name evidence="1" type="primary">mutS</name>
    <name type="ordered locus">ECIAI1_2828</name>
</gene>
<dbReference type="EMBL" id="CU928160">
    <property type="protein sequence ID" value="CAQ99652.1"/>
    <property type="molecule type" value="Genomic_DNA"/>
</dbReference>
<dbReference type="RefSeq" id="WP_001272898.1">
    <property type="nucleotide sequence ID" value="NC_011741.1"/>
</dbReference>
<dbReference type="SMR" id="B7LXE0"/>
<dbReference type="KEGG" id="ecr:ECIAI1_2828"/>
<dbReference type="HOGENOM" id="CLU_002472_4_0_6"/>
<dbReference type="GO" id="GO:0005829">
    <property type="term" value="C:cytosol"/>
    <property type="evidence" value="ECO:0007669"/>
    <property type="project" value="TreeGrafter"/>
</dbReference>
<dbReference type="GO" id="GO:0005524">
    <property type="term" value="F:ATP binding"/>
    <property type="evidence" value="ECO:0007669"/>
    <property type="project" value="UniProtKB-UniRule"/>
</dbReference>
<dbReference type="GO" id="GO:0140664">
    <property type="term" value="F:ATP-dependent DNA damage sensor activity"/>
    <property type="evidence" value="ECO:0007669"/>
    <property type="project" value="InterPro"/>
</dbReference>
<dbReference type="GO" id="GO:0003684">
    <property type="term" value="F:damaged DNA binding"/>
    <property type="evidence" value="ECO:0007669"/>
    <property type="project" value="UniProtKB-UniRule"/>
</dbReference>
<dbReference type="GO" id="GO:0030983">
    <property type="term" value="F:mismatched DNA binding"/>
    <property type="evidence" value="ECO:0007669"/>
    <property type="project" value="InterPro"/>
</dbReference>
<dbReference type="GO" id="GO:0006298">
    <property type="term" value="P:mismatch repair"/>
    <property type="evidence" value="ECO:0007669"/>
    <property type="project" value="UniProtKB-UniRule"/>
</dbReference>
<dbReference type="CDD" id="cd03284">
    <property type="entry name" value="ABC_MutS1"/>
    <property type="match status" value="1"/>
</dbReference>
<dbReference type="FunFam" id="1.10.1420.10:FF:000002">
    <property type="entry name" value="DNA mismatch repair protein MutS"/>
    <property type="match status" value="1"/>
</dbReference>
<dbReference type="FunFam" id="3.30.420.110:FF:000001">
    <property type="entry name" value="DNA mismatch repair protein MutS"/>
    <property type="match status" value="1"/>
</dbReference>
<dbReference type="FunFam" id="3.40.1170.10:FF:000001">
    <property type="entry name" value="DNA mismatch repair protein MutS"/>
    <property type="match status" value="1"/>
</dbReference>
<dbReference type="FunFam" id="3.40.50.300:FF:000283">
    <property type="entry name" value="DNA mismatch repair protein MutS"/>
    <property type="match status" value="1"/>
</dbReference>
<dbReference type="Gene3D" id="1.10.1420.10">
    <property type="match status" value="2"/>
</dbReference>
<dbReference type="Gene3D" id="6.10.140.430">
    <property type="match status" value="1"/>
</dbReference>
<dbReference type="Gene3D" id="3.40.1170.10">
    <property type="entry name" value="DNA repair protein MutS, domain I"/>
    <property type="match status" value="1"/>
</dbReference>
<dbReference type="Gene3D" id="3.30.420.110">
    <property type="entry name" value="MutS, connector domain"/>
    <property type="match status" value="1"/>
</dbReference>
<dbReference type="Gene3D" id="3.40.50.300">
    <property type="entry name" value="P-loop containing nucleotide triphosphate hydrolases"/>
    <property type="match status" value="1"/>
</dbReference>
<dbReference type="HAMAP" id="MF_00096">
    <property type="entry name" value="MutS"/>
    <property type="match status" value="1"/>
</dbReference>
<dbReference type="InterPro" id="IPR005748">
    <property type="entry name" value="DNA_mismatch_repair_MutS"/>
</dbReference>
<dbReference type="InterPro" id="IPR007695">
    <property type="entry name" value="DNA_mismatch_repair_MutS-lik_N"/>
</dbReference>
<dbReference type="InterPro" id="IPR017261">
    <property type="entry name" value="DNA_mismatch_repair_MutS/MSH"/>
</dbReference>
<dbReference type="InterPro" id="IPR000432">
    <property type="entry name" value="DNA_mismatch_repair_MutS_C"/>
</dbReference>
<dbReference type="InterPro" id="IPR007861">
    <property type="entry name" value="DNA_mismatch_repair_MutS_clamp"/>
</dbReference>
<dbReference type="InterPro" id="IPR007696">
    <property type="entry name" value="DNA_mismatch_repair_MutS_core"/>
</dbReference>
<dbReference type="InterPro" id="IPR016151">
    <property type="entry name" value="DNA_mismatch_repair_MutS_N"/>
</dbReference>
<dbReference type="InterPro" id="IPR036187">
    <property type="entry name" value="DNA_mismatch_repair_MutS_sf"/>
</dbReference>
<dbReference type="InterPro" id="IPR007860">
    <property type="entry name" value="DNA_mmatch_repair_MutS_con_dom"/>
</dbReference>
<dbReference type="InterPro" id="IPR045076">
    <property type="entry name" value="MutS"/>
</dbReference>
<dbReference type="InterPro" id="IPR036678">
    <property type="entry name" value="MutS_con_dom_sf"/>
</dbReference>
<dbReference type="InterPro" id="IPR027417">
    <property type="entry name" value="P-loop_NTPase"/>
</dbReference>
<dbReference type="NCBIfam" id="TIGR01070">
    <property type="entry name" value="mutS1"/>
    <property type="match status" value="1"/>
</dbReference>
<dbReference type="NCBIfam" id="NF003810">
    <property type="entry name" value="PRK05399.1"/>
    <property type="match status" value="1"/>
</dbReference>
<dbReference type="PANTHER" id="PTHR11361:SF34">
    <property type="entry name" value="DNA MISMATCH REPAIR PROTEIN MSH1, MITOCHONDRIAL"/>
    <property type="match status" value="1"/>
</dbReference>
<dbReference type="PANTHER" id="PTHR11361">
    <property type="entry name" value="DNA MISMATCH REPAIR PROTEIN MUTS FAMILY MEMBER"/>
    <property type="match status" value="1"/>
</dbReference>
<dbReference type="Pfam" id="PF01624">
    <property type="entry name" value="MutS_I"/>
    <property type="match status" value="1"/>
</dbReference>
<dbReference type="Pfam" id="PF05188">
    <property type="entry name" value="MutS_II"/>
    <property type="match status" value="1"/>
</dbReference>
<dbReference type="Pfam" id="PF05192">
    <property type="entry name" value="MutS_III"/>
    <property type="match status" value="1"/>
</dbReference>
<dbReference type="Pfam" id="PF05190">
    <property type="entry name" value="MutS_IV"/>
    <property type="match status" value="1"/>
</dbReference>
<dbReference type="Pfam" id="PF00488">
    <property type="entry name" value="MutS_V"/>
    <property type="match status" value="1"/>
</dbReference>
<dbReference type="PIRSF" id="PIRSF037677">
    <property type="entry name" value="DNA_mis_repair_Msh6"/>
    <property type="match status" value="1"/>
</dbReference>
<dbReference type="SMART" id="SM00534">
    <property type="entry name" value="MUTSac"/>
    <property type="match status" value="1"/>
</dbReference>
<dbReference type="SMART" id="SM00533">
    <property type="entry name" value="MUTSd"/>
    <property type="match status" value="1"/>
</dbReference>
<dbReference type="SUPFAM" id="SSF55271">
    <property type="entry name" value="DNA repair protein MutS, domain I"/>
    <property type="match status" value="1"/>
</dbReference>
<dbReference type="SUPFAM" id="SSF53150">
    <property type="entry name" value="DNA repair protein MutS, domain II"/>
    <property type="match status" value="1"/>
</dbReference>
<dbReference type="SUPFAM" id="SSF48334">
    <property type="entry name" value="DNA repair protein MutS, domain III"/>
    <property type="match status" value="1"/>
</dbReference>
<dbReference type="SUPFAM" id="SSF52540">
    <property type="entry name" value="P-loop containing nucleoside triphosphate hydrolases"/>
    <property type="match status" value="1"/>
</dbReference>
<dbReference type="PROSITE" id="PS00486">
    <property type="entry name" value="DNA_MISMATCH_REPAIR_2"/>
    <property type="match status" value="1"/>
</dbReference>
<keyword id="KW-0067">ATP-binding</keyword>
<keyword id="KW-0227">DNA damage</keyword>
<keyword id="KW-0234">DNA repair</keyword>
<keyword id="KW-0238">DNA-binding</keyword>
<keyword id="KW-0547">Nucleotide-binding</keyword>
<reference key="1">
    <citation type="journal article" date="2009" name="PLoS Genet.">
        <title>Organised genome dynamics in the Escherichia coli species results in highly diverse adaptive paths.</title>
        <authorList>
            <person name="Touchon M."/>
            <person name="Hoede C."/>
            <person name="Tenaillon O."/>
            <person name="Barbe V."/>
            <person name="Baeriswyl S."/>
            <person name="Bidet P."/>
            <person name="Bingen E."/>
            <person name="Bonacorsi S."/>
            <person name="Bouchier C."/>
            <person name="Bouvet O."/>
            <person name="Calteau A."/>
            <person name="Chiapello H."/>
            <person name="Clermont O."/>
            <person name="Cruveiller S."/>
            <person name="Danchin A."/>
            <person name="Diard M."/>
            <person name="Dossat C."/>
            <person name="Karoui M.E."/>
            <person name="Frapy E."/>
            <person name="Garry L."/>
            <person name="Ghigo J.M."/>
            <person name="Gilles A.M."/>
            <person name="Johnson J."/>
            <person name="Le Bouguenec C."/>
            <person name="Lescat M."/>
            <person name="Mangenot S."/>
            <person name="Martinez-Jehanne V."/>
            <person name="Matic I."/>
            <person name="Nassif X."/>
            <person name="Oztas S."/>
            <person name="Petit M.A."/>
            <person name="Pichon C."/>
            <person name="Rouy Z."/>
            <person name="Ruf C.S."/>
            <person name="Schneider D."/>
            <person name="Tourret J."/>
            <person name="Vacherie B."/>
            <person name="Vallenet D."/>
            <person name="Medigue C."/>
            <person name="Rocha E.P.C."/>
            <person name="Denamur E."/>
        </authorList>
    </citation>
    <scope>NUCLEOTIDE SEQUENCE [LARGE SCALE GENOMIC DNA]</scope>
    <source>
        <strain>IAI1</strain>
    </source>
</reference>
<name>MUTS_ECO8A</name>
<organism>
    <name type="scientific">Escherichia coli O8 (strain IAI1)</name>
    <dbReference type="NCBI Taxonomy" id="585034"/>
    <lineage>
        <taxon>Bacteria</taxon>
        <taxon>Pseudomonadati</taxon>
        <taxon>Pseudomonadota</taxon>
        <taxon>Gammaproteobacteria</taxon>
        <taxon>Enterobacterales</taxon>
        <taxon>Enterobacteriaceae</taxon>
        <taxon>Escherichia</taxon>
    </lineage>
</organism>